<reference key="1">
    <citation type="submission" date="2007-09" db="EMBL/GenBank/DDBJ databases">
        <title>Complete genome sequence of Rickettsia akari.</title>
        <authorList>
            <person name="Madan A."/>
            <person name="Fahey J."/>
            <person name="Helton E."/>
            <person name="Ketteman M."/>
            <person name="Madan A."/>
            <person name="Rodrigues S."/>
            <person name="Sanchez A."/>
            <person name="Whiting M."/>
            <person name="Dasch G."/>
            <person name="Eremeeva M."/>
        </authorList>
    </citation>
    <scope>NUCLEOTIDE SEQUENCE [LARGE SCALE GENOMIC DNA]</scope>
    <source>
        <strain>Hartford</strain>
    </source>
</reference>
<evidence type="ECO:0000255" key="1">
    <source>
        <dbReference type="HAMAP-Rule" id="MF_01322"/>
    </source>
</evidence>
<comment type="function">
    <text evidence="1">DNA-dependent RNA polymerase catalyzes the transcription of DNA into RNA using the four ribonucleoside triphosphates as substrates.</text>
</comment>
<comment type="catalytic activity">
    <reaction evidence="1">
        <text>RNA(n) + a ribonucleoside 5'-triphosphate = RNA(n+1) + diphosphate</text>
        <dbReference type="Rhea" id="RHEA:21248"/>
        <dbReference type="Rhea" id="RHEA-COMP:14527"/>
        <dbReference type="Rhea" id="RHEA-COMP:17342"/>
        <dbReference type="ChEBI" id="CHEBI:33019"/>
        <dbReference type="ChEBI" id="CHEBI:61557"/>
        <dbReference type="ChEBI" id="CHEBI:140395"/>
        <dbReference type="EC" id="2.7.7.6"/>
    </reaction>
</comment>
<comment type="cofactor">
    <cofactor evidence="1">
        <name>Mg(2+)</name>
        <dbReference type="ChEBI" id="CHEBI:18420"/>
    </cofactor>
    <text evidence="1">Binds 1 Mg(2+) ion per subunit.</text>
</comment>
<comment type="cofactor">
    <cofactor evidence="1">
        <name>Zn(2+)</name>
        <dbReference type="ChEBI" id="CHEBI:29105"/>
    </cofactor>
    <text evidence="1">Binds 2 Zn(2+) ions per subunit.</text>
</comment>
<comment type="subunit">
    <text evidence="1">The RNAP catalytic core consists of 2 alpha, 1 beta, 1 beta' and 1 omega subunit. When a sigma factor is associated with the core the holoenzyme is formed, which can initiate transcription.</text>
</comment>
<comment type="similarity">
    <text evidence="1">Belongs to the RNA polymerase beta' chain family.</text>
</comment>
<proteinExistence type="inferred from homology"/>
<organism>
    <name type="scientific">Rickettsia akari (strain Hartford)</name>
    <dbReference type="NCBI Taxonomy" id="293614"/>
    <lineage>
        <taxon>Bacteria</taxon>
        <taxon>Pseudomonadati</taxon>
        <taxon>Pseudomonadota</taxon>
        <taxon>Alphaproteobacteria</taxon>
        <taxon>Rickettsiales</taxon>
        <taxon>Rickettsiaceae</taxon>
        <taxon>Rickettsieae</taxon>
        <taxon>Rickettsia</taxon>
        <taxon>spotted fever group</taxon>
    </lineage>
</organism>
<protein>
    <recommendedName>
        <fullName evidence="1">DNA-directed RNA polymerase subunit beta'</fullName>
        <shortName evidence="1">RNAP subunit beta'</shortName>
        <ecNumber evidence="1">2.7.7.6</ecNumber>
    </recommendedName>
    <alternativeName>
        <fullName evidence="1">RNA polymerase subunit beta'</fullName>
    </alternativeName>
    <alternativeName>
        <fullName evidence="1">Transcriptase subunit beta'</fullName>
    </alternativeName>
</protein>
<name>RPOC_RICAH</name>
<dbReference type="EC" id="2.7.7.6" evidence="1"/>
<dbReference type="EMBL" id="CP000847">
    <property type="protein sequence ID" value="ABV74533.1"/>
    <property type="molecule type" value="Genomic_DNA"/>
</dbReference>
<dbReference type="RefSeq" id="WP_012013403.1">
    <property type="nucleotide sequence ID" value="NC_009881.1"/>
</dbReference>
<dbReference type="SMR" id="A8GMA8"/>
<dbReference type="STRING" id="293614.A1C_01015"/>
<dbReference type="KEGG" id="rak:A1C_01015"/>
<dbReference type="eggNOG" id="COG0086">
    <property type="taxonomic scope" value="Bacteria"/>
</dbReference>
<dbReference type="HOGENOM" id="CLU_000524_3_1_5"/>
<dbReference type="Proteomes" id="UP000006830">
    <property type="component" value="Chromosome"/>
</dbReference>
<dbReference type="GO" id="GO:0000428">
    <property type="term" value="C:DNA-directed RNA polymerase complex"/>
    <property type="evidence" value="ECO:0007669"/>
    <property type="project" value="UniProtKB-KW"/>
</dbReference>
<dbReference type="GO" id="GO:0003677">
    <property type="term" value="F:DNA binding"/>
    <property type="evidence" value="ECO:0007669"/>
    <property type="project" value="UniProtKB-UniRule"/>
</dbReference>
<dbReference type="GO" id="GO:0003899">
    <property type="term" value="F:DNA-directed RNA polymerase activity"/>
    <property type="evidence" value="ECO:0007669"/>
    <property type="project" value="UniProtKB-UniRule"/>
</dbReference>
<dbReference type="GO" id="GO:0000287">
    <property type="term" value="F:magnesium ion binding"/>
    <property type="evidence" value="ECO:0007669"/>
    <property type="project" value="UniProtKB-UniRule"/>
</dbReference>
<dbReference type="GO" id="GO:0008270">
    <property type="term" value="F:zinc ion binding"/>
    <property type="evidence" value="ECO:0007669"/>
    <property type="project" value="UniProtKB-UniRule"/>
</dbReference>
<dbReference type="GO" id="GO:0006351">
    <property type="term" value="P:DNA-templated transcription"/>
    <property type="evidence" value="ECO:0007669"/>
    <property type="project" value="UniProtKB-UniRule"/>
</dbReference>
<dbReference type="CDD" id="cd02655">
    <property type="entry name" value="RNAP_beta'_C"/>
    <property type="match status" value="1"/>
</dbReference>
<dbReference type="CDD" id="cd01609">
    <property type="entry name" value="RNAP_beta'_N"/>
    <property type="match status" value="1"/>
</dbReference>
<dbReference type="FunFam" id="1.10.150.390:FF:000002">
    <property type="entry name" value="DNA-directed RNA polymerase subunit beta"/>
    <property type="match status" value="1"/>
</dbReference>
<dbReference type="Gene3D" id="1.10.132.30">
    <property type="match status" value="1"/>
</dbReference>
<dbReference type="Gene3D" id="1.10.150.390">
    <property type="match status" value="1"/>
</dbReference>
<dbReference type="Gene3D" id="1.10.1790.20">
    <property type="match status" value="1"/>
</dbReference>
<dbReference type="Gene3D" id="1.10.40.90">
    <property type="match status" value="1"/>
</dbReference>
<dbReference type="Gene3D" id="2.40.40.20">
    <property type="match status" value="1"/>
</dbReference>
<dbReference type="Gene3D" id="2.40.50.100">
    <property type="match status" value="3"/>
</dbReference>
<dbReference type="Gene3D" id="4.10.860.120">
    <property type="entry name" value="RNA polymerase II, clamp domain"/>
    <property type="match status" value="1"/>
</dbReference>
<dbReference type="Gene3D" id="1.10.274.100">
    <property type="entry name" value="RNA polymerase Rpb1, domain 3"/>
    <property type="match status" value="2"/>
</dbReference>
<dbReference type="HAMAP" id="MF_01322">
    <property type="entry name" value="RNApol_bact_RpoC"/>
    <property type="match status" value="1"/>
</dbReference>
<dbReference type="InterPro" id="IPR045867">
    <property type="entry name" value="DNA-dir_RpoC_beta_prime"/>
</dbReference>
<dbReference type="InterPro" id="IPR012754">
    <property type="entry name" value="DNA-dir_RpoC_beta_prime_bact"/>
</dbReference>
<dbReference type="InterPro" id="IPR000722">
    <property type="entry name" value="RNA_pol_asu"/>
</dbReference>
<dbReference type="InterPro" id="IPR006592">
    <property type="entry name" value="RNA_pol_N"/>
</dbReference>
<dbReference type="InterPro" id="IPR007080">
    <property type="entry name" value="RNA_pol_Rpb1_1"/>
</dbReference>
<dbReference type="InterPro" id="IPR007066">
    <property type="entry name" value="RNA_pol_Rpb1_3"/>
</dbReference>
<dbReference type="InterPro" id="IPR042102">
    <property type="entry name" value="RNA_pol_Rpb1_3_sf"/>
</dbReference>
<dbReference type="InterPro" id="IPR007083">
    <property type="entry name" value="RNA_pol_Rpb1_4"/>
</dbReference>
<dbReference type="InterPro" id="IPR007081">
    <property type="entry name" value="RNA_pol_Rpb1_5"/>
</dbReference>
<dbReference type="InterPro" id="IPR044893">
    <property type="entry name" value="RNA_pol_Rpb1_clamp_domain"/>
</dbReference>
<dbReference type="InterPro" id="IPR038120">
    <property type="entry name" value="Rpb1_funnel_sf"/>
</dbReference>
<dbReference type="NCBIfam" id="TIGR02386">
    <property type="entry name" value="rpoC_TIGR"/>
    <property type="match status" value="1"/>
</dbReference>
<dbReference type="PANTHER" id="PTHR19376">
    <property type="entry name" value="DNA-DIRECTED RNA POLYMERASE"/>
    <property type="match status" value="1"/>
</dbReference>
<dbReference type="PANTHER" id="PTHR19376:SF54">
    <property type="entry name" value="DNA-DIRECTED RNA POLYMERASE SUBUNIT BETA"/>
    <property type="match status" value="1"/>
</dbReference>
<dbReference type="Pfam" id="PF04997">
    <property type="entry name" value="RNA_pol_Rpb1_1"/>
    <property type="match status" value="1"/>
</dbReference>
<dbReference type="Pfam" id="PF00623">
    <property type="entry name" value="RNA_pol_Rpb1_2"/>
    <property type="match status" value="2"/>
</dbReference>
<dbReference type="Pfam" id="PF04983">
    <property type="entry name" value="RNA_pol_Rpb1_3"/>
    <property type="match status" value="1"/>
</dbReference>
<dbReference type="Pfam" id="PF05000">
    <property type="entry name" value="RNA_pol_Rpb1_4"/>
    <property type="match status" value="1"/>
</dbReference>
<dbReference type="Pfam" id="PF04998">
    <property type="entry name" value="RNA_pol_Rpb1_5"/>
    <property type="match status" value="1"/>
</dbReference>
<dbReference type="SMART" id="SM00663">
    <property type="entry name" value="RPOLA_N"/>
    <property type="match status" value="1"/>
</dbReference>
<dbReference type="SUPFAM" id="SSF64484">
    <property type="entry name" value="beta and beta-prime subunits of DNA dependent RNA-polymerase"/>
    <property type="match status" value="1"/>
</dbReference>
<sequence length="1372" mass="153257">MSVVNFYGQLSNTQQFDQIRINIASPDQVRSWSFGEVTKPETINYRTFKPEKDGLFCARIFGPVKDYECLCGKYKRMKNRGITCEKCGVEVTVSRVRRERMGHIELAAPVAHIWFLKSLPSRISTLLDMTMRDVEKILYFENYVVIDPGLSILQKGELLTEEELQKAKDKYGEDAFTASIGAEVIQQMLKELDFAKLKHELYEELQTTSSEVKKKKIVKRLKLVEDFLESENKPEWMIMDVLPVIPPEIRPLVMLDGGRFATSDLNELYRRVINRNNRLKKLIESKAPDIIVRNEKRMLQEAVDALFDNGRRGRAAKNANKRPFKSLSDMLKGKQGRFRQNLLGKRVDYSGRSVIVVGPELKLHQCGLPKKMALELFKPFIYSKLELYGIATTIKAAKRMVEAEKPEVWDVLEEVIREHPVLLNRAPTLHRLGIQAFEPLLIEGKAIQLHPLVCAAFNADFDGDQMAVHIPLSIEAQLEARVFMMSTNNILSPANGRPIIVPDKDIVLGLYYLTLAFDNEVGEGMMFSDLAEMEHALYNKFITIHTKIKYRRNQLNAEGKMVHVIIDTTYGRLMVGELLPSNPNIEFKFINKQLTKKDISLVIDLVYRHCGQKATVIFADQLMKLGFKYACSSGISFGMDDMVVPESKSTHINETQLEIKEFEQQYSNGLITYGEKYNKVVDAWSRCTDRVANDMMKEIATPRVSDEPNHQKINAIYMMAISGARGSFQQIKQLGGMRGLMTKSNGQIIQTPIISNFKEGLTEFECFNSANGMRKGQIDTALKTASSGYLTRKLVDVAQDCIITEKDCGTDKGIEVKSVIEGGEVIVPSSEKILGRTAAIDIFHPVTNALILNKGELINEAKLEQIESAGLDRIMIKSVLTCESTTGICSICYGRDLATGTLVSEGEAIGVIAAQSIGEPGTQLTMRTFHIGGAATKGAEVSSVEASYGAKVKIISRNVVINSEERKIVMSRNCELLLLDNNGNEKARHKIPYGARLLVDDGDMVVKTQKLAEWDPYTIPIITEKSGKVLFKDMVEGISIRDVTDEATGIPSKVIIESKQYSRGAELRPRIQLLDAEGAVITLSNGLEARYYLPVGAVLSVEDGVQISVGDIIARIPKESTTTKDITGGLPRVAELVEARRPKDHAVIAEVDGRVEFGKDYKSKRRIIIHPIDETMSIEYMVPKGKHVVVNEGDFVKKGDLLIDGNPVLQDILKVMGVEVLANYIVKEVQAVYRLQGVKIDDKHIEVIIRQMLQKVEITDSGGTTLLAGEKIDRHEFEEINKKAIKNGLKPAAAQLILQGITKASLQTRSFISAASFQETTRVLTEAAIAGKVDKLRGLKENVIVGRLVPAGTGYFMDKMRKAAVKLDEENI</sequence>
<feature type="chain" id="PRO_0000353419" description="DNA-directed RNA polymerase subunit beta'">
    <location>
        <begin position="1"/>
        <end position="1372"/>
    </location>
</feature>
<feature type="binding site" evidence="1">
    <location>
        <position position="69"/>
    </location>
    <ligand>
        <name>Zn(2+)</name>
        <dbReference type="ChEBI" id="CHEBI:29105"/>
        <label>1</label>
    </ligand>
</feature>
<feature type="binding site" evidence="1">
    <location>
        <position position="71"/>
    </location>
    <ligand>
        <name>Zn(2+)</name>
        <dbReference type="ChEBI" id="CHEBI:29105"/>
        <label>1</label>
    </ligand>
</feature>
<feature type="binding site" evidence="1">
    <location>
        <position position="84"/>
    </location>
    <ligand>
        <name>Zn(2+)</name>
        <dbReference type="ChEBI" id="CHEBI:29105"/>
        <label>1</label>
    </ligand>
</feature>
<feature type="binding site" evidence="1">
    <location>
        <position position="87"/>
    </location>
    <ligand>
        <name>Zn(2+)</name>
        <dbReference type="ChEBI" id="CHEBI:29105"/>
        <label>1</label>
    </ligand>
</feature>
<feature type="binding site" evidence="1">
    <location>
        <position position="460"/>
    </location>
    <ligand>
        <name>Mg(2+)</name>
        <dbReference type="ChEBI" id="CHEBI:18420"/>
    </ligand>
</feature>
<feature type="binding site" evidence="1">
    <location>
        <position position="462"/>
    </location>
    <ligand>
        <name>Mg(2+)</name>
        <dbReference type="ChEBI" id="CHEBI:18420"/>
    </ligand>
</feature>
<feature type="binding site" evidence="1">
    <location>
        <position position="464"/>
    </location>
    <ligand>
        <name>Mg(2+)</name>
        <dbReference type="ChEBI" id="CHEBI:18420"/>
    </ligand>
</feature>
<feature type="binding site" evidence="1">
    <location>
        <position position="808"/>
    </location>
    <ligand>
        <name>Zn(2+)</name>
        <dbReference type="ChEBI" id="CHEBI:29105"/>
        <label>2</label>
    </ligand>
</feature>
<feature type="binding site" evidence="1">
    <location>
        <position position="882"/>
    </location>
    <ligand>
        <name>Zn(2+)</name>
        <dbReference type="ChEBI" id="CHEBI:29105"/>
        <label>2</label>
    </ligand>
</feature>
<feature type="binding site" evidence="1">
    <location>
        <position position="889"/>
    </location>
    <ligand>
        <name>Zn(2+)</name>
        <dbReference type="ChEBI" id="CHEBI:29105"/>
        <label>2</label>
    </ligand>
</feature>
<feature type="binding site" evidence="1">
    <location>
        <position position="892"/>
    </location>
    <ligand>
        <name>Zn(2+)</name>
        <dbReference type="ChEBI" id="CHEBI:29105"/>
        <label>2</label>
    </ligand>
</feature>
<keyword id="KW-0240">DNA-directed RNA polymerase</keyword>
<keyword id="KW-0460">Magnesium</keyword>
<keyword id="KW-0479">Metal-binding</keyword>
<keyword id="KW-0548">Nucleotidyltransferase</keyword>
<keyword id="KW-0804">Transcription</keyword>
<keyword id="KW-0808">Transferase</keyword>
<keyword id="KW-0862">Zinc</keyword>
<accession>A8GMA8</accession>
<gene>
    <name evidence="1" type="primary">rpoC</name>
    <name type="ordered locus">A1C_01015</name>
</gene>